<comment type="function">
    <text evidence="1">Involved in calcium binding and microtubule stabilization.</text>
</comment>
<comment type="subcellular location">
    <subcellularLocation>
        <location evidence="1">Cytoplasm</location>
    </subcellularLocation>
</comment>
<comment type="similarity">
    <text evidence="2">Belongs to the TCTP family.</text>
</comment>
<keyword id="KW-0106">Calcium</keyword>
<keyword id="KW-0963">Cytoplasm</keyword>
<proteinExistence type="evidence at protein level"/>
<feature type="chain" id="PRO_0000397952" description="Translationally-controlled tumor protein homolog 2">
    <location>
        <begin position="1" status="less than"/>
        <end position="17" status="greater than"/>
    </location>
</feature>
<feature type="non-consecutive residues" evidence="3">
    <location>
        <begin position="9"/>
        <end position="10"/>
    </location>
</feature>
<feature type="non-terminal residue" evidence="3">
    <location>
        <position position="1"/>
    </location>
</feature>
<feature type="non-terminal residue" evidence="3">
    <location>
        <position position="17"/>
    </location>
</feature>
<protein>
    <recommendedName>
        <fullName evidence="1">Translationally-controlled tumor protein homolog 2</fullName>
        <shortName evidence="1">TCTP2</shortName>
    </recommendedName>
</protein>
<accession>P85905</accession>
<name>TCTP2_PSEMZ</name>
<evidence type="ECO:0000250" key="1">
    <source>
        <dbReference type="UniProtKB" id="Q9XHL7"/>
    </source>
</evidence>
<evidence type="ECO:0000255" key="2"/>
<evidence type="ECO:0000303" key="3">
    <source>
    </source>
</evidence>
<evidence type="ECO:0000305" key="4"/>
<dbReference type="GO" id="GO:0005737">
    <property type="term" value="C:cytoplasm"/>
    <property type="evidence" value="ECO:0007669"/>
    <property type="project" value="UniProtKB-SubCell"/>
</dbReference>
<reference evidence="4" key="1">
    <citation type="journal article" date="2008" name="J. Proteomics">
        <title>A proteomics approach to identify proteins differentially expressed in Douglas-fir seedlings infected by Phellinus sulphurascens.</title>
        <authorList>
            <person name="Islam M.A."/>
            <person name="Sturrock R.N."/>
            <person name="Ekramoddoullah A.K.M."/>
        </authorList>
    </citation>
    <scope>IDENTIFICATION BY MASS SPECTROMETRY</scope>
</reference>
<sequence length="17" mass="1890">VVDIVDTFRNNIQGATK</sequence>
<organism>
    <name type="scientific">Pseudotsuga menziesii</name>
    <name type="common">Douglas-fir</name>
    <name type="synonym">Abies menziesii</name>
    <dbReference type="NCBI Taxonomy" id="3357"/>
    <lineage>
        <taxon>Eukaryota</taxon>
        <taxon>Viridiplantae</taxon>
        <taxon>Streptophyta</taxon>
        <taxon>Embryophyta</taxon>
        <taxon>Tracheophyta</taxon>
        <taxon>Spermatophyta</taxon>
        <taxon>Pinopsida</taxon>
        <taxon>Pinidae</taxon>
        <taxon>Conifers I</taxon>
        <taxon>Pinales</taxon>
        <taxon>Pinaceae</taxon>
        <taxon>Pseudotsuga</taxon>
    </lineage>
</organism>